<name>DAPB_BOTFB</name>
<gene>
    <name type="primary">dapB</name>
    <name type="ORF">BC1G_13641</name>
    <name type="ORF">BCIN_15g01570</name>
</gene>
<comment type="function">
    <text evidence="1">Type IV dipeptidyl-peptidase which removes N-terminal dipeptides sequentially from polypeptides having unsubstituted N-termini provided that the penultimate residue is proline.</text>
</comment>
<comment type="catalytic activity">
    <reaction>
        <text>Release of an N-terminal dipeptide, Xaa-Yaa-|-Zaa-, from a polypeptide, preferentially when Yaa is Pro, provided Zaa is neither Pro nor hydroxyproline.</text>
        <dbReference type="EC" id="3.4.14.5"/>
    </reaction>
</comment>
<comment type="subcellular location">
    <subcellularLocation>
        <location evidence="1">Vacuole membrane</location>
        <topology evidence="1">Single-pass type II membrane protein</topology>
    </subcellularLocation>
    <text evidence="1">Lysosome-like vacuoles.</text>
</comment>
<comment type="similarity">
    <text evidence="4">Belongs to the peptidase S9B family.</text>
</comment>
<reference key="1">
    <citation type="journal article" date="2011" name="PLoS Genet.">
        <title>Genomic analysis of the necrotrophic fungal pathogens Sclerotinia sclerotiorum and Botrytis cinerea.</title>
        <authorList>
            <person name="Amselem J."/>
            <person name="Cuomo C.A."/>
            <person name="van Kan J.A.L."/>
            <person name="Viaud M."/>
            <person name="Benito E.P."/>
            <person name="Couloux A."/>
            <person name="Coutinho P.M."/>
            <person name="de Vries R.P."/>
            <person name="Dyer P.S."/>
            <person name="Fillinger S."/>
            <person name="Fournier E."/>
            <person name="Gout L."/>
            <person name="Hahn M."/>
            <person name="Kohn L."/>
            <person name="Lapalu N."/>
            <person name="Plummer K.M."/>
            <person name="Pradier J.-M."/>
            <person name="Quevillon E."/>
            <person name="Sharon A."/>
            <person name="Simon A."/>
            <person name="ten Have A."/>
            <person name="Tudzynski B."/>
            <person name="Tudzynski P."/>
            <person name="Wincker P."/>
            <person name="Andrew M."/>
            <person name="Anthouard V."/>
            <person name="Beever R.E."/>
            <person name="Beffa R."/>
            <person name="Benoit I."/>
            <person name="Bouzid O."/>
            <person name="Brault B."/>
            <person name="Chen Z."/>
            <person name="Choquer M."/>
            <person name="Collemare J."/>
            <person name="Cotton P."/>
            <person name="Danchin E.G."/>
            <person name="Da Silva C."/>
            <person name="Gautier A."/>
            <person name="Giraud C."/>
            <person name="Giraud T."/>
            <person name="Gonzalez C."/>
            <person name="Grossetete S."/>
            <person name="Gueldener U."/>
            <person name="Henrissat B."/>
            <person name="Howlett B.J."/>
            <person name="Kodira C."/>
            <person name="Kretschmer M."/>
            <person name="Lappartient A."/>
            <person name="Leroch M."/>
            <person name="Levis C."/>
            <person name="Mauceli E."/>
            <person name="Neuveglise C."/>
            <person name="Oeser B."/>
            <person name="Pearson M."/>
            <person name="Poulain J."/>
            <person name="Poussereau N."/>
            <person name="Quesneville H."/>
            <person name="Rascle C."/>
            <person name="Schumacher J."/>
            <person name="Segurens B."/>
            <person name="Sexton A."/>
            <person name="Silva E."/>
            <person name="Sirven C."/>
            <person name="Soanes D.M."/>
            <person name="Talbot N.J."/>
            <person name="Templeton M."/>
            <person name="Yandava C."/>
            <person name="Yarden O."/>
            <person name="Zeng Q."/>
            <person name="Rollins J.A."/>
            <person name="Lebrun M.-H."/>
            <person name="Dickman M."/>
        </authorList>
    </citation>
    <scope>NUCLEOTIDE SEQUENCE [LARGE SCALE GENOMIC DNA]</scope>
    <source>
        <strain>B05.10</strain>
    </source>
</reference>
<reference key="2">
    <citation type="journal article" date="2012" name="Eukaryot. Cell">
        <title>Genome update of Botrytis cinerea strains B05.10 and T4.</title>
        <authorList>
            <person name="Staats M."/>
            <person name="van Kan J.A.L."/>
        </authorList>
    </citation>
    <scope>NUCLEOTIDE SEQUENCE [LARGE SCALE GENOMIC DNA]</scope>
    <scope>GENOME REANNOTATION</scope>
    <source>
        <strain>B05.10</strain>
    </source>
</reference>
<reference key="3">
    <citation type="journal article" date="2017" name="Mol. Plant Pathol.">
        <title>A gapless genome sequence of the fungus Botrytis cinerea.</title>
        <authorList>
            <person name="van Kan J.A.L."/>
            <person name="Stassen J.H.M."/>
            <person name="Mosbach A."/>
            <person name="van der Lee T.A.J."/>
            <person name="Faino L."/>
            <person name="Farmer A.D."/>
            <person name="Papasotiriou D.G."/>
            <person name="Zhou S."/>
            <person name="Seidl M.F."/>
            <person name="Cottam E."/>
            <person name="Edel D."/>
            <person name="Hahn M."/>
            <person name="Schwartz D.C."/>
            <person name="Dietrich R.A."/>
            <person name="Widdison S."/>
            <person name="Scalliet G."/>
        </authorList>
    </citation>
    <scope>NUCLEOTIDE SEQUENCE [LARGE SCALE GENOMIC DNA]</scope>
    <scope>GENOME REANNOTATION</scope>
    <source>
        <strain>B05.10</strain>
    </source>
</reference>
<keyword id="KW-0031">Aminopeptidase</keyword>
<keyword id="KW-0325">Glycoprotein</keyword>
<keyword id="KW-0378">Hydrolase</keyword>
<keyword id="KW-0472">Membrane</keyword>
<keyword id="KW-0645">Protease</keyword>
<keyword id="KW-1185">Reference proteome</keyword>
<keyword id="KW-0720">Serine protease</keyword>
<keyword id="KW-0735">Signal-anchor</keyword>
<keyword id="KW-0812">Transmembrane</keyword>
<keyword id="KW-1133">Transmembrane helix</keyword>
<keyword id="KW-0926">Vacuole</keyword>
<proteinExistence type="inferred from homology"/>
<evidence type="ECO:0000250" key="1"/>
<evidence type="ECO:0000255" key="2"/>
<evidence type="ECO:0000256" key="3">
    <source>
        <dbReference type="SAM" id="MobiDB-lite"/>
    </source>
</evidence>
<evidence type="ECO:0000305" key="4"/>
<protein>
    <recommendedName>
        <fullName>Probable dipeptidyl-aminopeptidase B</fullName>
        <shortName>DPAP B</shortName>
        <ecNumber>3.4.14.5</ecNumber>
    </recommendedName>
</protein>
<feature type="chain" id="PRO_0000412140" description="Probable dipeptidyl-aminopeptidase B">
    <location>
        <begin position="1"/>
        <end position="921"/>
    </location>
</feature>
<feature type="topological domain" description="Cytoplasmic" evidence="2">
    <location>
        <begin position="1"/>
        <end position="109"/>
    </location>
</feature>
<feature type="transmembrane region" description="Helical; Signal-anchor for type II membrane protein" evidence="2">
    <location>
        <begin position="110"/>
        <end position="130"/>
    </location>
</feature>
<feature type="topological domain" description="Vacuolar" evidence="2">
    <location>
        <begin position="131"/>
        <end position="921"/>
    </location>
</feature>
<feature type="region of interest" description="Disordered" evidence="3">
    <location>
        <begin position="1"/>
        <end position="33"/>
    </location>
</feature>
<feature type="region of interest" description="Disordered" evidence="3">
    <location>
        <begin position="45"/>
        <end position="66"/>
    </location>
</feature>
<feature type="region of interest" description="Disordered" evidence="3">
    <location>
        <begin position="138"/>
        <end position="157"/>
    </location>
</feature>
<feature type="compositionally biased region" description="Polar residues" evidence="3">
    <location>
        <begin position="10"/>
        <end position="22"/>
    </location>
</feature>
<feature type="compositionally biased region" description="Low complexity" evidence="3">
    <location>
        <begin position="23"/>
        <end position="33"/>
    </location>
</feature>
<feature type="active site" description="Charge relay system" evidence="1">
    <location>
        <position position="768"/>
    </location>
</feature>
<feature type="active site" description="Charge relay system" evidence="1">
    <location>
        <position position="845"/>
    </location>
</feature>
<feature type="active site" description="Charge relay system" evidence="1">
    <location>
        <position position="878"/>
    </location>
</feature>
<feature type="glycosylation site" description="N-linked (GlcNAc...) asparagine" evidence="2">
    <location>
        <position position="362"/>
    </location>
</feature>
<feature type="glycosylation site" description="N-linked (GlcNAc...) asparagine" evidence="2">
    <location>
        <position position="822"/>
    </location>
</feature>
<dbReference type="EC" id="3.4.14.5"/>
<dbReference type="EMBL" id="CP009819">
    <property type="protein sequence ID" value="ATZ57595.1"/>
    <property type="molecule type" value="Genomic_DNA"/>
</dbReference>
<dbReference type="RefSeq" id="XP_001547950.1">
    <property type="nucleotide sequence ID" value="XM_001547900.1"/>
</dbReference>
<dbReference type="SMR" id="A6SL49"/>
<dbReference type="ESTHER" id="botfb-dapb">
    <property type="family name" value="DPP4N_Peptidase_S9"/>
</dbReference>
<dbReference type="MEROPS" id="S09.006"/>
<dbReference type="GlyCosmos" id="A6SL49">
    <property type="glycosylation" value="2 sites, No reported glycans"/>
</dbReference>
<dbReference type="EnsemblFungi" id="Bcin15g01570.1">
    <property type="protein sequence ID" value="Bcin15p01570.1"/>
    <property type="gene ID" value="Bcin15g01570"/>
</dbReference>
<dbReference type="GeneID" id="5428447"/>
<dbReference type="KEGG" id="bfu:BCIN_15g01570"/>
<dbReference type="VEuPathDB" id="FungiDB:Bcin15g01570"/>
<dbReference type="OMA" id="MRTPQEN"/>
<dbReference type="OrthoDB" id="16520at2759"/>
<dbReference type="Proteomes" id="UP000001798">
    <property type="component" value="Chromosome bcin15"/>
</dbReference>
<dbReference type="GO" id="GO:0000329">
    <property type="term" value="C:fungal-type vacuole membrane"/>
    <property type="evidence" value="ECO:0007669"/>
    <property type="project" value="EnsemblFungi"/>
</dbReference>
<dbReference type="GO" id="GO:0005886">
    <property type="term" value="C:plasma membrane"/>
    <property type="evidence" value="ECO:0007669"/>
    <property type="project" value="TreeGrafter"/>
</dbReference>
<dbReference type="GO" id="GO:0004177">
    <property type="term" value="F:aminopeptidase activity"/>
    <property type="evidence" value="ECO:0007669"/>
    <property type="project" value="UniProtKB-KW"/>
</dbReference>
<dbReference type="GO" id="GO:0008239">
    <property type="term" value="F:dipeptidyl-peptidase activity"/>
    <property type="evidence" value="ECO:0007669"/>
    <property type="project" value="UniProtKB-EC"/>
</dbReference>
<dbReference type="GO" id="GO:0008236">
    <property type="term" value="F:serine-type peptidase activity"/>
    <property type="evidence" value="ECO:0007669"/>
    <property type="project" value="UniProtKB-KW"/>
</dbReference>
<dbReference type="GO" id="GO:0006508">
    <property type="term" value="P:proteolysis"/>
    <property type="evidence" value="ECO:0007669"/>
    <property type="project" value="UniProtKB-KW"/>
</dbReference>
<dbReference type="FunFam" id="3.40.50.1820:FF:000003">
    <property type="entry name" value="Dipeptidyl peptidase 4"/>
    <property type="match status" value="1"/>
</dbReference>
<dbReference type="Gene3D" id="3.40.50.1820">
    <property type="entry name" value="alpha/beta hydrolase"/>
    <property type="match status" value="1"/>
</dbReference>
<dbReference type="Gene3D" id="2.140.10.30">
    <property type="entry name" value="Dipeptidylpeptidase IV, N-terminal domain"/>
    <property type="match status" value="1"/>
</dbReference>
<dbReference type="InterPro" id="IPR029058">
    <property type="entry name" value="AB_hydrolase_fold"/>
</dbReference>
<dbReference type="InterPro" id="IPR001375">
    <property type="entry name" value="Peptidase_S9_cat"/>
</dbReference>
<dbReference type="InterPro" id="IPR002469">
    <property type="entry name" value="Peptidase_S9B_N"/>
</dbReference>
<dbReference type="InterPro" id="IPR050278">
    <property type="entry name" value="Serine_Prot_S9B/DPPIV"/>
</dbReference>
<dbReference type="PANTHER" id="PTHR11731:SF200">
    <property type="entry name" value="DIPEPTIDYL PEPTIDASE 10, ISOFORM B"/>
    <property type="match status" value="1"/>
</dbReference>
<dbReference type="PANTHER" id="PTHR11731">
    <property type="entry name" value="PROTEASE FAMILY S9B,C DIPEPTIDYL-PEPTIDASE IV-RELATED"/>
    <property type="match status" value="1"/>
</dbReference>
<dbReference type="Pfam" id="PF00930">
    <property type="entry name" value="DPPIV_N"/>
    <property type="match status" value="1"/>
</dbReference>
<dbReference type="Pfam" id="PF00326">
    <property type="entry name" value="Peptidase_S9"/>
    <property type="match status" value="1"/>
</dbReference>
<dbReference type="SUPFAM" id="SSF53474">
    <property type="entry name" value="alpha/beta-Hydrolases"/>
    <property type="match status" value="1"/>
</dbReference>
<dbReference type="SUPFAM" id="SSF82171">
    <property type="entry name" value="DPP6 N-terminal domain-like"/>
    <property type="match status" value="1"/>
</dbReference>
<organism>
    <name type="scientific">Botryotinia fuckeliana (strain B05.10)</name>
    <name type="common">Noble rot fungus</name>
    <name type="synonym">Botrytis cinerea</name>
    <dbReference type="NCBI Taxonomy" id="332648"/>
    <lineage>
        <taxon>Eukaryota</taxon>
        <taxon>Fungi</taxon>
        <taxon>Dikarya</taxon>
        <taxon>Ascomycota</taxon>
        <taxon>Pezizomycotina</taxon>
        <taxon>Leotiomycetes</taxon>
        <taxon>Helotiales</taxon>
        <taxon>Sclerotiniaceae</taxon>
        <taxon>Botrytis</taxon>
    </lineage>
</organism>
<sequence length="921" mass="103088">MAGHPEENAQLLSTEQESMSRNSSDSVASTASTTSLVFDRIGERVAANGSEKPTMVTPKFPPRGERAYADDEHTQIHLEEEEEKDYDMEDGAFLTNGATNKSVDKKLRRLIWIIGGVFIGAWVLALFIFLGKQAYKHSSESPHDPQATSSRGSGKKVTMDQVMGGQWRATKHSISWIEGANGEDGLLLEQGSVGKDYLIVEDVRTQSPSAVGTLDTMTLMKNGYFEVAGRSLTPSKVYPSKDLKKVLVATDVQSNWRHSFYAKYWIFDVETQTAEPLDPVDLDGRVQLASWSPKSDAIVFTRDNNMYLRKLASPTVVQITVDGGPEFFYGVPDWVYEEEVFAGASATWWDDSGKYIAFLRTNESEVPEYPVQYFVSRPSGKDPLPGEENYPEVREIKYPKAGAPNPTVDLLFYDISKAEVFEVKIAGGFEPKDLLITEVVWAGSTGKALIRETNRESDVLRVVLVDVVAREGKTVRFTDIAKLDGGWFEVSEDTRYIPADPANGRPHDGYIDTIIHENYDHLGYFTPMDNSEPILLTSGDWEVVKAPSAVDLKNNIVYFISTKESPITRQLYSVKLDGTDLKAITDTSTEGYYGASFSKGAGYVLLNYNGPNIPWQKVISTPSNDNQYTHIIEENKGLADMAKKHELPILIYQTVTVDGFELQVVERRPPHFNPKKKYPVLFYLYGGPGSQTVSKSFGVDFQSYIASNLGYIVVTVDGRGTGFIGRKARTIIRGNIGHYEARDQIETAKIWASKKYVDESRMAIWGWSYGGFMTLKTLEQDAGETFSYGMAVAPVTDWRFYDSIYTERYMHTPQHNPGGYDNTSISDVKSLAKNVRFLVMHGVADDNVHMQNTLTLLDKLDLAGVENYDVHVFPDSDHSIYFHNANRIVYDKLNNWLINAFNGEWLRTANAVPLEIDAAKV</sequence>
<accession>A6SL49</accession>
<accession>A0A384K439</accession>